<gene>
    <name type="primary">spaN</name>
    <name type="synonym">invJ</name>
    <name type="ordered locus">STM2892</name>
</gene>
<feature type="chain" id="PRO_0000180938" description="Surface presentation of antigens protein SpaN">
    <location>
        <begin position="1"/>
        <end position="336"/>
    </location>
</feature>
<feature type="region of interest" description="Disordered" evidence="1">
    <location>
        <begin position="300"/>
        <end position="336"/>
    </location>
</feature>
<feature type="compositionally biased region" description="Low complexity" evidence="1">
    <location>
        <begin position="319"/>
        <end position="328"/>
    </location>
</feature>
<dbReference type="EMBL" id="X73525">
    <property type="protein sequence ID" value="CAA51923.1"/>
    <property type="molecule type" value="Genomic_DNA"/>
</dbReference>
<dbReference type="EMBL" id="U10872">
    <property type="protein sequence ID" value="AAA83431.1"/>
    <property type="molecule type" value="Genomic_DNA"/>
</dbReference>
<dbReference type="EMBL" id="U43300">
    <property type="protein sequence ID" value="AAC44991.1"/>
    <property type="molecule type" value="Genomic_DNA"/>
</dbReference>
<dbReference type="EMBL" id="AE006468">
    <property type="protein sequence ID" value="AAL21772.1"/>
    <property type="molecule type" value="Genomic_DNA"/>
</dbReference>
<dbReference type="PIR" id="S37306">
    <property type="entry name" value="S37306"/>
</dbReference>
<dbReference type="RefSeq" id="NP_461813.1">
    <property type="nucleotide sequence ID" value="NC_003197.2"/>
</dbReference>
<dbReference type="RefSeq" id="WP_000503098.1">
    <property type="nucleotide sequence ID" value="NC_003197.2"/>
</dbReference>
<dbReference type="STRING" id="99287.STM2892"/>
<dbReference type="TCDB" id="3.A.6.1.3">
    <property type="family name" value="the type iii (virulence-related) secretory pathway (iiisp) family"/>
</dbReference>
<dbReference type="PaxDb" id="99287-STM2892"/>
<dbReference type="GeneID" id="1254415"/>
<dbReference type="KEGG" id="stm:STM2892"/>
<dbReference type="PATRIC" id="fig|99287.12.peg.3048"/>
<dbReference type="HOGENOM" id="CLU_826082_0_0_6"/>
<dbReference type="OMA" id="HCAPAKS"/>
<dbReference type="BioCyc" id="SENT99287:STM2892-MONOMER"/>
<dbReference type="Proteomes" id="UP000001014">
    <property type="component" value="Chromosome"/>
</dbReference>
<dbReference type="GO" id="GO:0005737">
    <property type="term" value="C:cytoplasm"/>
    <property type="evidence" value="ECO:0007669"/>
    <property type="project" value="UniProtKB-SubCell"/>
</dbReference>
<dbReference type="InterPro" id="IPR003066">
    <property type="entry name" value="Invas_InvJ"/>
</dbReference>
<dbReference type="InterPro" id="IPR056746">
    <property type="entry name" value="SPAN_dom"/>
</dbReference>
<dbReference type="NCBIfam" id="NF011862">
    <property type="entry name" value="PRK15334.1"/>
    <property type="match status" value="1"/>
</dbReference>
<dbReference type="Pfam" id="PF02510">
    <property type="entry name" value="SPAN"/>
    <property type="match status" value="1"/>
</dbReference>
<dbReference type="PIRSF" id="PIRSF020738">
    <property type="entry name" value="Invas_invJ"/>
    <property type="match status" value="1"/>
</dbReference>
<dbReference type="PRINTS" id="PR01306">
    <property type="entry name" value="SSPANPROTEIN"/>
</dbReference>
<evidence type="ECO:0000256" key="1">
    <source>
        <dbReference type="SAM" id="MobiDB-lite"/>
    </source>
</evidence>
<evidence type="ECO:0000305" key="2"/>
<protein>
    <recommendedName>
        <fullName>Surface presentation of antigens protein SpaN</fullName>
    </recommendedName>
    <alternativeName>
        <fullName>Invasion protein InvJ</fullName>
    </alternativeName>
</protein>
<proteinExistence type="inferred from homology"/>
<comment type="function">
    <text>Involved in a secretory pathway responsible for the surface presentation of determinants needed for the entry of Salmonella species into mammalian cells.</text>
</comment>
<comment type="subcellular location">
    <subcellularLocation>
        <location evidence="2">Cytoplasm</location>
    </subcellularLocation>
</comment>
<comment type="similarity">
    <text evidence="2">Belongs to the SpaN family.</text>
</comment>
<accession>P40613</accession>
<sequence>MGDVSAVSSSGNILLPQQDEVGGLSEALKKAVEKHKTEYSGDKKDRDYGDAFVMHKETALPLLLAAWRHGAPAKSEHHNGNVSGLHHNGKSELRIAEKLLKVTAEKSVGLISAEAKVDKSAALLSSKNRPLESVSGKKLSADLKAVESVSEVTDNATGISDDNIKALPGDNKAIAGEGVRKEGAPLARDVAPARMAAANTGKPEDKDHKKVKDVSQLPLQPTTIADLSQLTGGDEKMPLAAQSKPMMTIFPTADGVKGEDSSLTYRFQRWGNDYSVNIQARQAGEFSLIPSNTQVEHRLHDQWQNGNPQRWHLTRDDQQNPQQQQHRQQSGEEDDA</sequence>
<reference key="1">
    <citation type="journal article" date="1993" name="EMBO J.">
        <title>Cognate gene clusters govern invasion of host epithelial cells by Salmonella typhimurium and Shigella flexneri.</title>
        <authorList>
            <person name="Groisman E.A."/>
            <person name="Ochman H."/>
        </authorList>
    </citation>
    <scope>NUCLEOTIDE SEQUENCE [GENOMIC DNA]</scope>
</reference>
<reference key="2">
    <citation type="journal article" date="1995" name="Mol. Microbiol.">
        <title>Functional analysis of the Salmonella typhimurium invasion genes invl and invJ and identification of a target of the protein secretion apparatus encoded in the inv locus.</title>
        <authorList>
            <person name="Collazo C."/>
            <person name="Zierler M.K."/>
            <person name="Galan J.E."/>
        </authorList>
    </citation>
    <scope>NUCLEOTIDE SEQUENCE [GENOMIC DNA]</scope>
    <source>
        <strain>SR-11</strain>
    </source>
</reference>
<reference key="3">
    <citation type="submission" date="1996-01" db="EMBL/GenBank/DDBJ databases">
        <authorList>
            <person name="Boyd E.F."/>
            <person name="Li J."/>
            <person name="Nelson K."/>
            <person name="Ochman H."/>
            <person name="Selander R.K."/>
        </authorList>
    </citation>
    <scope>NUCLEOTIDE SEQUENCE [GENOMIC DNA]</scope>
    <source>
        <strain>S4194</strain>
    </source>
</reference>
<reference key="4">
    <citation type="journal article" date="2001" name="Nature">
        <title>Complete genome sequence of Salmonella enterica serovar Typhimurium LT2.</title>
        <authorList>
            <person name="McClelland M."/>
            <person name="Sanderson K.E."/>
            <person name="Spieth J."/>
            <person name="Clifton S.W."/>
            <person name="Latreille P."/>
            <person name="Courtney L."/>
            <person name="Porwollik S."/>
            <person name="Ali J."/>
            <person name="Dante M."/>
            <person name="Du F."/>
            <person name="Hou S."/>
            <person name="Layman D."/>
            <person name="Leonard S."/>
            <person name="Nguyen C."/>
            <person name="Scott K."/>
            <person name="Holmes A."/>
            <person name="Grewal N."/>
            <person name="Mulvaney E."/>
            <person name="Ryan E."/>
            <person name="Sun H."/>
            <person name="Florea L."/>
            <person name="Miller W."/>
            <person name="Stoneking T."/>
            <person name="Nhan M."/>
            <person name="Waterston R."/>
            <person name="Wilson R.K."/>
        </authorList>
    </citation>
    <scope>NUCLEOTIDE SEQUENCE [LARGE SCALE GENOMIC DNA]</scope>
    <source>
        <strain>LT2 / SGSC1412 / ATCC 700720</strain>
    </source>
</reference>
<organism>
    <name type="scientific">Salmonella typhimurium (strain LT2 / SGSC1412 / ATCC 700720)</name>
    <dbReference type="NCBI Taxonomy" id="99287"/>
    <lineage>
        <taxon>Bacteria</taxon>
        <taxon>Pseudomonadati</taxon>
        <taxon>Pseudomonadota</taxon>
        <taxon>Gammaproteobacteria</taxon>
        <taxon>Enterobacterales</taxon>
        <taxon>Enterobacteriaceae</taxon>
        <taxon>Salmonella</taxon>
    </lineage>
</organism>
<name>SPAN_SALTY</name>
<keyword id="KW-0963">Cytoplasm</keyword>
<keyword id="KW-1185">Reference proteome</keyword>
<keyword id="KW-0843">Virulence</keyword>